<sequence length="79" mass="9126">MKEQIFDIIETISGTDEFREDLDMDLFEEGILDSMRAIMLIVELEGAFDISLPPSEMDREDWNTANKIAARVQEKTDEN</sequence>
<name>DLTC_LACLS</name>
<gene>
    <name evidence="1" type="primary">dltC</name>
    <name type="ordered locus">LACR_1372</name>
</gene>
<dbReference type="EMBL" id="CP000425">
    <property type="protein sequence ID" value="ABJ72893.1"/>
    <property type="molecule type" value="Genomic_DNA"/>
</dbReference>
<dbReference type="RefSeq" id="WP_011676184.1">
    <property type="nucleotide sequence ID" value="NC_008527.1"/>
</dbReference>
<dbReference type="SMR" id="Q02YS9"/>
<dbReference type="GeneID" id="61109507"/>
<dbReference type="KEGG" id="llc:LACR_1372"/>
<dbReference type="HOGENOM" id="CLU_108696_19_0_9"/>
<dbReference type="UniPathway" id="UPA00556"/>
<dbReference type="Proteomes" id="UP000000240">
    <property type="component" value="Chromosome"/>
</dbReference>
<dbReference type="GO" id="GO:0005737">
    <property type="term" value="C:cytoplasm"/>
    <property type="evidence" value="ECO:0007669"/>
    <property type="project" value="UniProtKB-SubCell"/>
</dbReference>
<dbReference type="GO" id="GO:0036370">
    <property type="term" value="F:D-alanyl carrier activity"/>
    <property type="evidence" value="ECO:0007669"/>
    <property type="project" value="UniProtKB-UniRule"/>
</dbReference>
<dbReference type="GO" id="GO:0071555">
    <property type="term" value="P:cell wall organization"/>
    <property type="evidence" value="ECO:0007669"/>
    <property type="project" value="UniProtKB-KW"/>
</dbReference>
<dbReference type="GO" id="GO:0070395">
    <property type="term" value="P:lipoteichoic acid biosynthetic process"/>
    <property type="evidence" value="ECO:0007669"/>
    <property type="project" value="UniProtKB-UniRule"/>
</dbReference>
<dbReference type="Gene3D" id="1.10.1200.10">
    <property type="entry name" value="ACP-like"/>
    <property type="match status" value="1"/>
</dbReference>
<dbReference type="HAMAP" id="MF_00565">
    <property type="entry name" value="DltC"/>
    <property type="match status" value="1"/>
</dbReference>
<dbReference type="InterPro" id="IPR036736">
    <property type="entry name" value="ACP-like_sf"/>
</dbReference>
<dbReference type="InterPro" id="IPR003230">
    <property type="entry name" value="DltC"/>
</dbReference>
<dbReference type="InterPro" id="IPR009081">
    <property type="entry name" value="PP-bd_ACP"/>
</dbReference>
<dbReference type="NCBIfam" id="TIGR01688">
    <property type="entry name" value="dltC"/>
    <property type="match status" value="1"/>
</dbReference>
<dbReference type="NCBIfam" id="NF003464">
    <property type="entry name" value="PRK05087.1"/>
    <property type="match status" value="1"/>
</dbReference>
<dbReference type="Pfam" id="PF00550">
    <property type="entry name" value="PP-binding"/>
    <property type="match status" value="1"/>
</dbReference>
<dbReference type="SUPFAM" id="SSF47336">
    <property type="entry name" value="ACP-like"/>
    <property type="match status" value="1"/>
</dbReference>
<dbReference type="PROSITE" id="PS50075">
    <property type="entry name" value="CARRIER"/>
    <property type="match status" value="1"/>
</dbReference>
<evidence type="ECO:0000255" key="1">
    <source>
        <dbReference type="HAMAP-Rule" id="MF_00565"/>
    </source>
</evidence>
<reference key="1">
    <citation type="journal article" date="2006" name="Proc. Natl. Acad. Sci. U.S.A.">
        <title>Comparative genomics of the lactic acid bacteria.</title>
        <authorList>
            <person name="Makarova K.S."/>
            <person name="Slesarev A."/>
            <person name="Wolf Y.I."/>
            <person name="Sorokin A."/>
            <person name="Mirkin B."/>
            <person name="Koonin E.V."/>
            <person name="Pavlov A."/>
            <person name="Pavlova N."/>
            <person name="Karamychev V."/>
            <person name="Polouchine N."/>
            <person name="Shakhova V."/>
            <person name="Grigoriev I."/>
            <person name="Lou Y."/>
            <person name="Rohksar D."/>
            <person name="Lucas S."/>
            <person name="Huang K."/>
            <person name="Goodstein D.M."/>
            <person name="Hawkins T."/>
            <person name="Plengvidhya V."/>
            <person name="Welker D."/>
            <person name="Hughes J."/>
            <person name="Goh Y."/>
            <person name="Benson A."/>
            <person name="Baldwin K."/>
            <person name="Lee J.-H."/>
            <person name="Diaz-Muniz I."/>
            <person name="Dosti B."/>
            <person name="Smeianov V."/>
            <person name="Wechter W."/>
            <person name="Barabote R."/>
            <person name="Lorca G."/>
            <person name="Altermann E."/>
            <person name="Barrangou R."/>
            <person name="Ganesan B."/>
            <person name="Xie Y."/>
            <person name="Rawsthorne H."/>
            <person name="Tamir D."/>
            <person name="Parker C."/>
            <person name="Breidt F."/>
            <person name="Broadbent J.R."/>
            <person name="Hutkins R."/>
            <person name="O'Sullivan D."/>
            <person name="Steele J."/>
            <person name="Unlu G."/>
            <person name="Saier M.H. Jr."/>
            <person name="Klaenhammer T."/>
            <person name="Richardson P."/>
            <person name="Kozyavkin S."/>
            <person name="Weimer B.C."/>
            <person name="Mills D.A."/>
        </authorList>
    </citation>
    <scope>NUCLEOTIDE SEQUENCE [LARGE SCALE GENOMIC DNA]</scope>
    <source>
        <strain>SK11</strain>
    </source>
</reference>
<proteinExistence type="inferred from homology"/>
<accession>Q02YS9</accession>
<organism>
    <name type="scientific">Lactococcus lactis subsp. cremoris (strain SK11)</name>
    <dbReference type="NCBI Taxonomy" id="272622"/>
    <lineage>
        <taxon>Bacteria</taxon>
        <taxon>Bacillati</taxon>
        <taxon>Bacillota</taxon>
        <taxon>Bacilli</taxon>
        <taxon>Lactobacillales</taxon>
        <taxon>Streptococcaceae</taxon>
        <taxon>Lactococcus</taxon>
        <taxon>Lactococcus cremoris subsp. cremoris</taxon>
    </lineage>
</organism>
<comment type="function">
    <text evidence="1">Carrier protein involved in the D-alanylation of lipoteichoic acid (LTA). The loading of thioester-linked D-alanine onto DltC is catalyzed by D-alanine--D-alanyl carrier protein ligase DltA. The DltC-carried D-alanyl group is further transferred to cell membrane phosphatidylglycerol (PG) by forming an ester bond, probably catalyzed by DltD. D-alanylation of LTA plays an important role in modulating the properties of the cell wall in Gram-positive bacteria, influencing the net charge of the cell wall.</text>
</comment>
<comment type="pathway">
    <text evidence="1">Cell wall biogenesis; lipoteichoic acid biosynthesis.</text>
</comment>
<comment type="subcellular location">
    <subcellularLocation>
        <location evidence="1">Cytoplasm</location>
    </subcellularLocation>
</comment>
<comment type="PTM">
    <text evidence="1">4'-phosphopantetheine is transferred from CoA to a specific serine of apo-DCP.</text>
</comment>
<comment type="similarity">
    <text evidence="1">Belongs to the DltC family.</text>
</comment>
<protein>
    <recommendedName>
        <fullName evidence="1">D-alanyl carrier protein</fullName>
        <shortName evidence="1">DCP</shortName>
    </recommendedName>
    <alternativeName>
        <fullName evidence="1">D-alanine--poly(phosphoribitol) ligase subunit 2</fullName>
    </alternativeName>
</protein>
<feature type="chain" id="PRO_1000024919" description="D-alanyl carrier protein">
    <location>
        <begin position="1"/>
        <end position="79"/>
    </location>
</feature>
<feature type="domain" description="Carrier" evidence="1">
    <location>
        <begin position="1"/>
        <end position="76"/>
    </location>
</feature>
<feature type="modified residue" description="O-(pantetheine 4'-phosphoryl)serine" evidence="1">
    <location>
        <position position="34"/>
    </location>
</feature>
<keyword id="KW-0961">Cell wall biogenesis/degradation</keyword>
<keyword id="KW-0963">Cytoplasm</keyword>
<keyword id="KW-0596">Phosphopantetheine</keyword>
<keyword id="KW-0597">Phosphoprotein</keyword>